<dbReference type="EMBL" id="AF215065">
    <property type="protein sequence ID" value="AAG60493.1"/>
    <property type="molecule type" value="mRNA"/>
</dbReference>
<dbReference type="SMR" id="Q9BP73"/>
<dbReference type="ConoServer" id="752">
    <property type="toxin name" value="Ts6.7 precursor"/>
</dbReference>
<dbReference type="GO" id="GO:0005576">
    <property type="term" value="C:extracellular region"/>
    <property type="evidence" value="ECO:0007669"/>
    <property type="project" value="UniProtKB-SubCell"/>
</dbReference>
<dbReference type="GO" id="GO:0008200">
    <property type="term" value="F:ion channel inhibitor activity"/>
    <property type="evidence" value="ECO:0007669"/>
    <property type="project" value="InterPro"/>
</dbReference>
<dbReference type="GO" id="GO:0090729">
    <property type="term" value="F:toxin activity"/>
    <property type="evidence" value="ECO:0007669"/>
    <property type="project" value="UniProtKB-KW"/>
</dbReference>
<dbReference type="InterPro" id="IPR004214">
    <property type="entry name" value="Conotoxin"/>
</dbReference>
<dbReference type="Pfam" id="PF02950">
    <property type="entry name" value="Conotoxin"/>
    <property type="match status" value="1"/>
</dbReference>
<proteinExistence type="evidence at transcript level"/>
<feature type="signal peptide" evidence="2">
    <location>
        <begin position="1"/>
        <end position="24"/>
    </location>
</feature>
<feature type="propeptide" id="PRO_0000404868" evidence="1">
    <location>
        <begin position="25"/>
        <end position="46"/>
    </location>
</feature>
<feature type="peptide" id="PRO_0000404869" description="Conotoxin TsMSGL-2">
    <location>
        <begin position="47"/>
        <end position="78"/>
    </location>
</feature>
<feature type="modified residue" description="Leucine amide" evidence="1">
    <location>
        <position position="78"/>
    </location>
</feature>
<feature type="disulfide bond" evidence="1">
    <location>
        <begin position="52"/>
        <end position="64"/>
    </location>
</feature>
<feature type="disulfide bond" evidence="1">
    <location>
        <begin position="56"/>
        <end position="73"/>
    </location>
</feature>
<feature type="disulfide bond" evidence="1">
    <location>
        <begin position="63"/>
        <end position="77"/>
    </location>
</feature>
<evidence type="ECO:0000250" key="1"/>
<evidence type="ECO:0000255" key="2"/>
<evidence type="ECO:0000305" key="3"/>
<keyword id="KW-0027">Amidation</keyword>
<keyword id="KW-1015">Disulfide bond</keyword>
<keyword id="KW-0960">Knottin</keyword>
<keyword id="KW-0528">Neurotoxin</keyword>
<keyword id="KW-0964">Secreted</keyword>
<keyword id="KW-0732">Signal</keyword>
<keyword id="KW-0800">Toxin</keyword>
<reference key="1">
    <citation type="journal article" date="2001" name="Mol. Biol. Evol.">
        <title>Mechanisms for evolving hypervariability: the case of conopeptides.</title>
        <authorList>
            <person name="Conticello S.G."/>
            <person name="Gilad Y."/>
            <person name="Avidan N."/>
            <person name="Ben-Asher E."/>
            <person name="Levy Z."/>
            <person name="Fainzilber M."/>
        </authorList>
    </citation>
    <scope>NUCLEOTIDE SEQUENCE [MRNA]</scope>
    <source>
        <tissue>Venom duct</tissue>
    </source>
</reference>
<name>O367_CONTS</name>
<sequence>MSGLGIMVLTLLLLVFMATSHQDAGEKQATQRDAVNVRRRRSIAGRTTTEECDEYCEDLNKNCCGLSNGEPVCATACLG</sequence>
<organism>
    <name type="scientific">Conus tessulatus</name>
    <name type="common">Tessellate cone</name>
    <dbReference type="NCBI Taxonomy" id="101317"/>
    <lineage>
        <taxon>Eukaryota</taxon>
        <taxon>Metazoa</taxon>
        <taxon>Spiralia</taxon>
        <taxon>Lophotrochozoa</taxon>
        <taxon>Mollusca</taxon>
        <taxon>Gastropoda</taxon>
        <taxon>Caenogastropoda</taxon>
        <taxon>Neogastropoda</taxon>
        <taxon>Conoidea</taxon>
        <taxon>Conidae</taxon>
        <taxon>Conus</taxon>
        <taxon>Tesselliconus</taxon>
    </lineage>
</organism>
<protein>
    <recommendedName>
        <fullName>Conotoxin TsMSGL-2</fullName>
    </recommendedName>
</protein>
<comment type="subcellular location">
    <subcellularLocation>
        <location evidence="1">Secreted</location>
    </subcellularLocation>
</comment>
<comment type="tissue specificity">
    <text>Expressed by the venom duct.</text>
</comment>
<comment type="domain">
    <text evidence="1">The presence of a 'disulfide through disulfide knot' structurally defines this protein as a knottin.</text>
</comment>
<comment type="domain">
    <text>The cysteine framework is VI/VII (C-C-CC-C-C).</text>
</comment>
<comment type="similarity">
    <text evidence="3">Belongs to the conotoxin O3 superfamily.</text>
</comment>
<accession>Q9BP73</accession>